<organism>
    <name type="scientific">Cyberlindnera jadinii</name>
    <name type="common">Torula yeast</name>
    <name type="synonym">Pichia jadinii</name>
    <dbReference type="NCBI Taxonomy" id="4903"/>
    <lineage>
        <taxon>Eukaryota</taxon>
        <taxon>Fungi</taxon>
        <taxon>Dikarya</taxon>
        <taxon>Ascomycota</taxon>
        <taxon>Saccharomycotina</taxon>
        <taxon>Saccharomycetes</taxon>
        <taxon>Phaffomycetales</taxon>
        <taxon>Phaffomycetaceae</taxon>
        <taxon>Cyberlindnera</taxon>
    </lineage>
</organism>
<proteinExistence type="inferred from homology"/>
<accession>Q6ZYA7</accession>
<evidence type="ECO:0000250" key="1"/>
<evidence type="ECO:0000305" key="2"/>
<gene>
    <name type="primary">gpd2</name>
</gene>
<sequence>MTDIGESESDISTDVSALPMLSHSVSYTSIQKPPFVVSVIGSGNWGTTVAKIIAENTRENPLLFEQKVRMWVYEEEFEGSNLSDIINTEHVNKKYLPGIKLPDNLVAVPDLLEAVQYSNILIFNIPHQHLEKILSQLRGNIDPRARAISCLKGLRVNLDGVELLPDIIQDALGIHCGVLAGANLAQEVAEQRFSETTVGYPLPADYKPGDVDHTVLYTLFHRPYFHVHVIEDIAGISCAGALKNIIAISVGFVEGLEWGDNAKAAMLRRGLLEMIKFGRKFFPGCLVSSFTEESAGVADLFTTCTGGRNFKLAKIMAQTGKSAHEVEKEILNGQSAQGLITAKEIHELIKNKGCEEEFPLFETTYQILFHGVRIGILPYMLENKWSISKPNYSS</sequence>
<dbReference type="EC" id="1.1.1.8"/>
<dbReference type="EMBL" id="AJ635370">
    <property type="protein sequence ID" value="CAG25779.2"/>
    <property type="molecule type" value="Genomic_DNA"/>
</dbReference>
<dbReference type="EMBL" id="AJ632340">
    <property type="protein sequence ID" value="CAG15348.2"/>
    <property type="molecule type" value="Genomic_DNA"/>
</dbReference>
<dbReference type="SMR" id="Q6ZYA7"/>
<dbReference type="GO" id="GO:0005829">
    <property type="term" value="C:cytosol"/>
    <property type="evidence" value="ECO:0007669"/>
    <property type="project" value="TreeGrafter"/>
</dbReference>
<dbReference type="GO" id="GO:0005634">
    <property type="term" value="C:nucleus"/>
    <property type="evidence" value="ECO:0007669"/>
    <property type="project" value="TreeGrafter"/>
</dbReference>
<dbReference type="GO" id="GO:0141152">
    <property type="term" value="F:glycerol-3-phosphate dehydrogenase (NAD+) activity"/>
    <property type="evidence" value="ECO:0007669"/>
    <property type="project" value="UniProtKB-EC"/>
</dbReference>
<dbReference type="GO" id="GO:0051287">
    <property type="term" value="F:NAD binding"/>
    <property type="evidence" value="ECO:0007669"/>
    <property type="project" value="InterPro"/>
</dbReference>
<dbReference type="GO" id="GO:0042803">
    <property type="term" value="F:protein homodimerization activity"/>
    <property type="evidence" value="ECO:0007669"/>
    <property type="project" value="InterPro"/>
</dbReference>
<dbReference type="GO" id="GO:0005975">
    <property type="term" value="P:carbohydrate metabolic process"/>
    <property type="evidence" value="ECO:0007669"/>
    <property type="project" value="InterPro"/>
</dbReference>
<dbReference type="GO" id="GO:0046168">
    <property type="term" value="P:glycerol-3-phosphate catabolic process"/>
    <property type="evidence" value="ECO:0007669"/>
    <property type="project" value="InterPro"/>
</dbReference>
<dbReference type="FunFam" id="1.10.1040.10:FF:000004">
    <property type="entry name" value="Glycerol-3-phosphate dehydrogenase [NAD(+)]"/>
    <property type="match status" value="1"/>
</dbReference>
<dbReference type="Gene3D" id="1.10.1040.10">
    <property type="entry name" value="N-(1-d-carboxylethyl)-l-norvaline Dehydrogenase, domain 2"/>
    <property type="match status" value="1"/>
</dbReference>
<dbReference type="Gene3D" id="3.40.50.720">
    <property type="entry name" value="NAD(P)-binding Rossmann-like Domain"/>
    <property type="match status" value="1"/>
</dbReference>
<dbReference type="InterPro" id="IPR008927">
    <property type="entry name" value="6-PGluconate_DH-like_C_sf"/>
</dbReference>
<dbReference type="InterPro" id="IPR013328">
    <property type="entry name" value="6PGD_dom2"/>
</dbReference>
<dbReference type="InterPro" id="IPR006168">
    <property type="entry name" value="G3P_DH_NAD-dep"/>
</dbReference>
<dbReference type="InterPro" id="IPR006109">
    <property type="entry name" value="G3P_DH_NAD-dep_C"/>
</dbReference>
<dbReference type="InterPro" id="IPR017751">
    <property type="entry name" value="G3P_DH_NAD-dep_euk"/>
</dbReference>
<dbReference type="InterPro" id="IPR011128">
    <property type="entry name" value="G3P_DH_NAD-dep_N"/>
</dbReference>
<dbReference type="InterPro" id="IPR036291">
    <property type="entry name" value="NAD(P)-bd_dom_sf"/>
</dbReference>
<dbReference type="NCBIfam" id="TIGR03376">
    <property type="entry name" value="glycerol3P_DH"/>
    <property type="match status" value="1"/>
</dbReference>
<dbReference type="PANTHER" id="PTHR11728">
    <property type="entry name" value="GLYCEROL-3-PHOSPHATE DEHYDROGENASE"/>
    <property type="match status" value="1"/>
</dbReference>
<dbReference type="PANTHER" id="PTHR11728:SF8">
    <property type="entry name" value="GLYCEROL-3-PHOSPHATE DEHYDROGENASE [NAD(+)]-RELATED"/>
    <property type="match status" value="1"/>
</dbReference>
<dbReference type="Pfam" id="PF07479">
    <property type="entry name" value="NAD_Gly3P_dh_C"/>
    <property type="match status" value="1"/>
</dbReference>
<dbReference type="Pfam" id="PF01210">
    <property type="entry name" value="NAD_Gly3P_dh_N"/>
    <property type="match status" value="1"/>
</dbReference>
<dbReference type="PIRSF" id="PIRSF000114">
    <property type="entry name" value="Glycerol-3-P_dh"/>
    <property type="match status" value="1"/>
</dbReference>
<dbReference type="PRINTS" id="PR00077">
    <property type="entry name" value="GPDHDRGNASE"/>
</dbReference>
<dbReference type="SUPFAM" id="SSF48179">
    <property type="entry name" value="6-phosphogluconate dehydrogenase C-terminal domain-like"/>
    <property type="match status" value="1"/>
</dbReference>
<dbReference type="SUPFAM" id="SSF51735">
    <property type="entry name" value="NAD(P)-binding Rossmann-fold domains"/>
    <property type="match status" value="1"/>
</dbReference>
<dbReference type="PROSITE" id="PS00957">
    <property type="entry name" value="NAD_G3PDH"/>
    <property type="match status" value="1"/>
</dbReference>
<protein>
    <recommendedName>
        <fullName>Glycerol-3-phosphate dehydrogenase [NAD(+)] 2</fullName>
        <ecNumber>1.1.1.8</ecNumber>
    </recommendedName>
</protein>
<name>GPD2_CYBJA</name>
<keyword id="KW-0520">NAD</keyword>
<keyword id="KW-0560">Oxidoreductase</keyword>
<comment type="catalytic activity">
    <reaction>
        <text>sn-glycerol 3-phosphate + NAD(+) = dihydroxyacetone phosphate + NADH + H(+)</text>
        <dbReference type="Rhea" id="RHEA:11092"/>
        <dbReference type="ChEBI" id="CHEBI:15378"/>
        <dbReference type="ChEBI" id="CHEBI:57540"/>
        <dbReference type="ChEBI" id="CHEBI:57597"/>
        <dbReference type="ChEBI" id="CHEBI:57642"/>
        <dbReference type="ChEBI" id="CHEBI:57945"/>
        <dbReference type="EC" id="1.1.1.8"/>
    </reaction>
</comment>
<comment type="similarity">
    <text evidence="2">Belongs to the NAD-dependent glycerol-3-phosphate dehydrogenase family.</text>
</comment>
<feature type="chain" id="PRO_0000138094" description="Glycerol-3-phosphate dehydrogenase [NAD(+)] 2">
    <location>
        <begin position="1"/>
        <end position="394"/>
    </location>
</feature>
<feature type="active site" description="Proton acceptor" evidence="1">
    <location>
        <position position="243"/>
    </location>
</feature>
<feature type="binding site" evidence="1">
    <location>
        <begin position="41"/>
        <end position="46"/>
    </location>
    <ligand>
        <name>NAD(+)</name>
        <dbReference type="ChEBI" id="CHEBI:57540"/>
    </ligand>
</feature>
<feature type="binding site" evidence="1">
    <location>
        <position position="152"/>
    </location>
    <ligand>
        <name>NAD(+)</name>
        <dbReference type="ChEBI" id="CHEBI:57540"/>
    </ligand>
</feature>
<feature type="binding site" evidence="1">
    <location>
        <position position="152"/>
    </location>
    <ligand>
        <name>substrate</name>
    </ligand>
</feature>
<feature type="binding site" evidence="1">
    <location>
        <position position="185"/>
    </location>
    <ligand>
        <name>NAD(+)</name>
        <dbReference type="ChEBI" id="CHEBI:57540"/>
    </ligand>
</feature>
<feature type="binding site" evidence="1">
    <location>
        <begin position="308"/>
        <end position="309"/>
    </location>
    <ligand>
        <name>substrate</name>
    </ligand>
</feature>
<feature type="binding site" evidence="1">
    <location>
        <position position="308"/>
    </location>
    <ligand>
        <name>NAD(+)</name>
        <dbReference type="ChEBI" id="CHEBI:57540"/>
    </ligand>
</feature>
<feature type="binding site" evidence="1">
    <location>
        <position position="337"/>
    </location>
    <ligand>
        <name>NAD(+)</name>
        <dbReference type="ChEBI" id="CHEBI:57540"/>
    </ligand>
</feature>
<reference key="1">
    <citation type="journal article" date="2006" name="DNA Seq.">
        <title>Identification of the genes GPD1 and GPD2 of Pichia jadinii.</title>
        <authorList>
            <person name="Ostermann K."/>
            <person name="Richter M."/>
            <person name="Zscharnack M."/>
            <person name="Rothe R."/>
            <person name="Walther T."/>
            <person name="Roedel G."/>
        </authorList>
    </citation>
    <scope>NUCLEOTIDE SEQUENCE [GENOMIC DNA]</scope>
    <source>
        <strain>ATCC 9950 / CBS 5609 / DSM 2361 / NBRC 0998 / NRRL Y-900</strain>
    </source>
</reference>